<name>ARRS_XENLA</name>
<gene>
    <name type="primary">sag</name>
</gene>
<feature type="chain" id="PRO_0000205192" description="S-arrestin">
    <location>
        <begin position="1"/>
        <end position="396"/>
    </location>
</feature>
<feature type="region of interest" description="Disordered" evidence="3">
    <location>
        <begin position="375"/>
        <end position="396"/>
    </location>
</feature>
<feature type="compositionally biased region" description="Basic and acidic residues" evidence="3">
    <location>
        <begin position="375"/>
        <end position="386"/>
    </location>
</feature>
<feature type="compositionally biased region" description="Acidic residues" evidence="3">
    <location>
        <begin position="387"/>
        <end position="396"/>
    </location>
</feature>
<feature type="strand" evidence="5">
    <location>
        <begin position="10"/>
        <end position="15"/>
    </location>
</feature>
<feature type="strand" evidence="5">
    <location>
        <begin position="22"/>
        <end position="26"/>
    </location>
</feature>
<feature type="strand" evidence="5">
    <location>
        <begin position="28"/>
        <end position="32"/>
    </location>
</feature>
<feature type="strand" evidence="5">
    <location>
        <begin position="40"/>
        <end position="45"/>
    </location>
</feature>
<feature type="turn" evidence="5">
    <location>
        <begin position="48"/>
        <end position="52"/>
    </location>
</feature>
<feature type="strand" evidence="5">
    <location>
        <begin position="55"/>
        <end position="69"/>
    </location>
</feature>
<feature type="strand" evidence="5">
    <location>
        <begin position="71"/>
        <end position="74"/>
    </location>
</feature>
<feature type="strand" evidence="5">
    <location>
        <begin position="77"/>
        <end position="90"/>
    </location>
</feature>
<feature type="helix" evidence="5">
    <location>
        <begin position="101"/>
        <end position="110"/>
    </location>
</feature>
<feature type="strand" evidence="5">
    <location>
        <begin position="114"/>
        <end position="119"/>
    </location>
</feature>
<feature type="strand" evidence="6">
    <location>
        <begin position="123"/>
        <end position="125"/>
    </location>
</feature>
<feature type="strand" evidence="5">
    <location>
        <begin position="129"/>
        <end position="132"/>
    </location>
</feature>
<feature type="helix" evidence="5">
    <location>
        <begin position="138"/>
        <end position="140"/>
    </location>
</feature>
<feature type="strand" evidence="5">
    <location>
        <begin position="142"/>
        <end position="154"/>
    </location>
</feature>
<feature type="helix" evidence="5">
    <location>
        <begin position="162"/>
        <end position="164"/>
    </location>
</feature>
<feature type="strand" evidence="5">
    <location>
        <begin position="165"/>
        <end position="174"/>
    </location>
</feature>
<feature type="strand" evidence="5">
    <location>
        <begin position="185"/>
        <end position="190"/>
    </location>
</feature>
<feature type="strand" evidence="6">
    <location>
        <begin position="193"/>
        <end position="195"/>
    </location>
</feature>
<feature type="strand" evidence="5">
    <location>
        <begin position="199"/>
        <end position="206"/>
    </location>
</feature>
<feature type="strand" evidence="5">
    <location>
        <begin position="208"/>
        <end position="211"/>
    </location>
</feature>
<feature type="strand" evidence="5">
    <location>
        <begin position="216"/>
        <end position="224"/>
    </location>
</feature>
<feature type="strand" evidence="5">
    <location>
        <begin position="226"/>
        <end position="243"/>
    </location>
</feature>
<feature type="strand" evidence="5">
    <location>
        <begin position="245"/>
        <end position="247"/>
    </location>
</feature>
<feature type="strand" evidence="5">
    <location>
        <begin position="250"/>
        <end position="260"/>
    </location>
</feature>
<feature type="strand" evidence="5">
    <location>
        <begin position="268"/>
        <end position="276"/>
    </location>
</feature>
<feature type="helix" evidence="5">
    <location>
        <begin position="280"/>
        <end position="283"/>
    </location>
</feature>
<feature type="strand" evidence="5">
    <location>
        <begin position="288"/>
        <end position="293"/>
    </location>
</feature>
<feature type="strand" evidence="5">
    <location>
        <begin position="297"/>
        <end position="299"/>
    </location>
</feature>
<feature type="helix" evidence="5">
    <location>
        <begin position="314"/>
        <end position="317"/>
    </location>
</feature>
<feature type="strand" evidence="5">
    <location>
        <begin position="318"/>
        <end position="332"/>
    </location>
</feature>
<feature type="strand" evidence="5">
    <location>
        <begin position="334"/>
        <end position="336"/>
    </location>
</feature>
<feature type="strand" evidence="5">
    <location>
        <begin position="341"/>
        <end position="352"/>
    </location>
</feature>
<feature type="strand" evidence="5">
    <location>
        <begin position="370"/>
        <end position="375"/>
    </location>
</feature>
<proteinExistence type="evidence at protein level"/>
<dbReference type="EMBL" id="U41623">
    <property type="protein sequence ID" value="AAB88584.1"/>
    <property type="molecule type" value="mRNA"/>
</dbReference>
<dbReference type="EMBL" id="BC075231">
    <property type="protein sequence ID" value="AAH75231.1"/>
    <property type="molecule type" value="mRNA"/>
</dbReference>
<dbReference type="RefSeq" id="NP_001081898.1">
    <property type="nucleotide sequence ID" value="NM_001088429.1"/>
</dbReference>
<dbReference type="PDB" id="8FUT">
    <property type="method" value="X-ray"/>
    <property type="resolution" value="2.54 A"/>
    <property type="chains" value="A=1-396"/>
</dbReference>
<dbReference type="PDB" id="8FUU">
    <property type="method" value="X-ray"/>
    <property type="resolution" value="2.89 A"/>
    <property type="chains" value="A=1-396"/>
</dbReference>
<dbReference type="PDBsum" id="8FUT"/>
<dbReference type="PDBsum" id="8FUU"/>
<dbReference type="SMR" id="P51477"/>
<dbReference type="DNASU" id="398109"/>
<dbReference type="GeneID" id="398109"/>
<dbReference type="KEGG" id="xla:398109"/>
<dbReference type="AGR" id="Xenbase:XB-GENE-17335209"/>
<dbReference type="CTD" id="398109"/>
<dbReference type="Xenbase" id="XB-GENE-17335209">
    <property type="gene designation" value="sag.L"/>
</dbReference>
<dbReference type="OMA" id="QPAPQDM"/>
<dbReference type="OrthoDB" id="298939at2759"/>
<dbReference type="Proteomes" id="UP000186698">
    <property type="component" value="Chromosome 5L"/>
</dbReference>
<dbReference type="GO" id="GO:0016020">
    <property type="term" value="C:membrane"/>
    <property type="evidence" value="ECO:0007669"/>
    <property type="project" value="UniProtKB-SubCell"/>
</dbReference>
<dbReference type="GO" id="GO:0001917">
    <property type="term" value="C:photoreceptor inner segment"/>
    <property type="evidence" value="ECO:0000318"/>
    <property type="project" value="GO_Central"/>
</dbReference>
<dbReference type="GO" id="GO:0001750">
    <property type="term" value="C:photoreceptor outer segment"/>
    <property type="evidence" value="ECO:0000250"/>
    <property type="project" value="UniProtKB"/>
</dbReference>
<dbReference type="GO" id="GO:0001664">
    <property type="term" value="F:G protein-coupled receptor binding"/>
    <property type="evidence" value="ECO:0000318"/>
    <property type="project" value="GO_Central"/>
</dbReference>
<dbReference type="GO" id="GO:0002031">
    <property type="term" value="P:G protein-coupled receptor internalization"/>
    <property type="evidence" value="ECO:0000318"/>
    <property type="project" value="GO_Central"/>
</dbReference>
<dbReference type="GO" id="GO:0007165">
    <property type="term" value="P:signal transduction"/>
    <property type="evidence" value="ECO:0007669"/>
    <property type="project" value="InterPro"/>
</dbReference>
<dbReference type="GO" id="GO:0007601">
    <property type="term" value="P:visual perception"/>
    <property type="evidence" value="ECO:0007669"/>
    <property type="project" value="UniProtKB-KW"/>
</dbReference>
<dbReference type="FunFam" id="2.60.40.840:FF:000002">
    <property type="entry name" value="Arrestin 3"/>
    <property type="match status" value="1"/>
</dbReference>
<dbReference type="FunFam" id="2.60.40.640:FF:000011">
    <property type="entry name" value="S-arrestin isoform X2"/>
    <property type="match status" value="1"/>
</dbReference>
<dbReference type="Gene3D" id="2.60.40.640">
    <property type="match status" value="1"/>
</dbReference>
<dbReference type="Gene3D" id="2.60.40.840">
    <property type="match status" value="1"/>
</dbReference>
<dbReference type="InterPro" id="IPR000698">
    <property type="entry name" value="Arrestin"/>
</dbReference>
<dbReference type="InterPro" id="IPR014752">
    <property type="entry name" value="Arrestin-like_C"/>
</dbReference>
<dbReference type="InterPro" id="IPR011021">
    <property type="entry name" value="Arrestin-like_N"/>
</dbReference>
<dbReference type="InterPro" id="IPR011022">
    <property type="entry name" value="Arrestin_C-like"/>
</dbReference>
<dbReference type="InterPro" id="IPR017864">
    <property type="entry name" value="Arrestin_CS"/>
</dbReference>
<dbReference type="InterPro" id="IPR014753">
    <property type="entry name" value="Arrestin_N"/>
</dbReference>
<dbReference type="InterPro" id="IPR014756">
    <property type="entry name" value="Ig_E-set"/>
</dbReference>
<dbReference type="PANTHER" id="PTHR11792">
    <property type="entry name" value="ARRESTIN"/>
    <property type="match status" value="1"/>
</dbReference>
<dbReference type="PANTHER" id="PTHR11792:SF15">
    <property type="entry name" value="S-ARRESTIN"/>
    <property type="match status" value="1"/>
</dbReference>
<dbReference type="Pfam" id="PF02752">
    <property type="entry name" value="Arrestin_C"/>
    <property type="match status" value="1"/>
</dbReference>
<dbReference type="Pfam" id="PF00339">
    <property type="entry name" value="Arrestin_N"/>
    <property type="match status" value="1"/>
</dbReference>
<dbReference type="PRINTS" id="PR00309">
    <property type="entry name" value="ARRESTIN"/>
</dbReference>
<dbReference type="SMART" id="SM01017">
    <property type="entry name" value="Arrestin_C"/>
    <property type="match status" value="1"/>
</dbReference>
<dbReference type="SUPFAM" id="SSF81296">
    <property type="entry name" value="E set domains"/>
    <property type="match status" value="2"/>
</dbReference>
<dbReference type="PROSITE" id="PS00295">
    <property type="entry name" value="ARRESTINS"/>
    <property type="match status" value="1"/>
</dbReference>
<comment type="function">
    <text evidence="2">Binds to photoactivated, phosphorylated RHO and terminates RHO signaling via G-proteins by competing with G-proteins for the same binding site on RHO. May play a role in preventing light-dependent degeneration of retinal photoreceptor cells.</text>
</comment>
<comment type="subunit">
    <text evidence="1">Interacts with RHO (via the phosphorylated C-terminus).</text>
</comment>
<comment type="subcellular location">
    <subcellularLocation>
        <location evidence="2">Cell projection</location>
        <location evidence="2">Cilium</location>
        <location evidence="2">Photoreceptor outer segment</location>
    </subcellularLocation>
    <subcellularLocation>
        <location evidence="2">Membrane</location>
        <topology evidence="2">Peripheral membrane protein</topology>
    </subcellularLocation>
</comment>
<comment type="similarity">
    <text evidence="4">Belongs to the arrestin family.</text>
</comment>
<accession>P51477</accession>
<accession>Q6DJE8</accession>
<organism>
    <name type="scientific">Xenopus laevis</name>
    <name type="common">African clawed frog</name>
    <dbReference type="NCBI Taxonomy" id="8355"/>
    <lineage>
        <taxon>Eukaryota</taxon>
        <taxon>Metazoa</taxon>
        <taxon>Chordata</taxon>
        <taxon>Craniata</taxon>
        <taxon>Vertebrata</taxon>
        <taxon>Euteleostomi</taxon>
        <taxon>Amphibia</taxon>
        <taxon>Batrachia</taxon>
        <taxon>Anura</taxon>
        <taxon>Pipoidea</taxon>
        <taxon>Pipidae</taxon>
        <taxon>Xenopodinae</taxon>
        <taxon>Xenopus</taxon>
        <taxon>Xenopus</taxon>
    </lineage>
</organism>
<evidence type="ECO:0000250" key="1">
    <source>
        <dbReference type="UniProtKB" id="P08168"/>
    </source>
</evidence>
<evidence type="ECO:0000250" key="2">
    <source>
        <dbReference type="UniProtKB" id="P20443"/>
    </source>
</evidence>
<evidence type="ECO:0000256" key="3">
    <source>
        <dbReference type="SAM" id="MobiDB-lite"/>
    </source>
</evidence>
<evidence type="ECO:0000305" key="4"/>
<evidence type="ECO:0007829" key="5">
    <source>
        <dbReference type="PDB" id="8FUT"/>
    </source>
</evidence>
<evidence type="ECO:0007829" key="6">
    <source>
        <dbReference type="PDB" id="8FUU"/>
    </source>
</evidence>
<sequence>MSGEKKSRHVMYKKTSRDKAVSVYLGKRDYVDHVDSVEPVDGVVLVDPDLLKGKKVYVTLTCAFRYGQEDIDVIGLTFRKDLYYARTQIYPPVEDPKALTKVQERLMKKLGNNAFPFVLEFPDFLPCSVSLQPAPSDVGKACGVDFEIKAFSTNNLEDRIHKKNSVRLMIRKIQYAPDQPGPKPRAETSWQFFMSDKPLHLTASLSKEVFYHGEPITVSVSVTNKSDKTVKKISASVEQVSNVVLYSSDYYIKTVALEESNEKVPSKASYNHTFSLLPLLAYNREKREIALDGKLKHEDTNLASSTLLKEGTDRTVMGILVDYKIKVTLTVSGLLGDMTSSEVSTELPFILMHPNPDGGAKESEQEDDMVFEEFARDPLKGELQAEEKEEEEDDEK</sequence>
<protein>
    <recommendedName>
        <fullName>S-arrestin</fullName>
    </recommendedName>
    <alternativeName>
        <fullName>Retinal S-antigen</fullName>
        <shortName>S-AG</shortName>
    </alternativeName>
    <alternativeName>
        <fullName>Rod photoreceptor arrestin</fullName>
    </alternativeName>
</protein>
<reference key="1">
    <citation type="submission" date="1995-12" db="EMBL/GenBank/DDBJ databases">
        <authorList>
            <person name="Sundareswaran S."/>
            <person name="Knox B.E."/>
        </authorList>
    </citation>
    <scope>NUCLEOTIDE SEQUENCE [MRNA]</scope>
    <source>
        <tissue>Retina</tissue>
    </source>
</reference>
<reference key="2">
    <citation type="submission" date="2004-06" db="EMBL/GenBank/DDBJ databases">
        <authorList>
            <consortium name="NIH - Xenopus Gene Collection (XGC) project"/>
        </authorList>
    </citation>
    <scope>NUCLEOTIDE SEQUENCE [LARGE SCALE MRNA]</scope>
    <source>
        <tissue>Brain</tissue>
    </source>
</reference>
<keyword id="KW-0002">3D-structure</keyword>
<keyword id="KW-0966">Cell projection</keyword>
<keyword id="KW-0472">Membrane</keyword>
<keyword id="KW-1185">Reference proteome</keyword>
<keyword id="KW-0716">Sensory transduction</keyword>
<keyword id="KW-0844">Vision</keyword>